<keyword id="KW-0349">Heme</keyword>
<keyword id="KW-0408">Iron</keyword>
<keyword id="KW-0479">Metal-binding</keyword>
<keyword id="KW-0514">Muscle protein</keyword>
<keyword id="KW-0561">Oxygen transport</keyword>
<keyword id="KW-1185">Reference proteome</keyword>
<keyword id="KW-0813">Transport</keyword>
<accession>O77003</accession>
<protein>
    <recommendedName>
        <fullName>Globin</fullName>
    </recommendedName>
    <alternativeName>
        <fullName>Myoglobin</fullName>
    </alternativeName>
</protein>
<sequence length="151" mass="16180">MSLSDADKKALDASWKKLTAGADGKKNAGINLVLWMFANVPNMRAQFSKFNANQSDDALKGDAEFIKQVNVIVAALDGLLQSVNNPGQLQANLDKLAKSHVNLKIGLEFFGPLQQNIHSFIESALGVGAGSDEPKAWGNLIAAFNETLKKA</sequence>
<name>GLB_BIOGL</name>
<feature type="initiator methionine" description="Removed" evidence="1">
    <location>
        <position position="1"/>
    </location>
</feature>
<feature type="chain" id="PRO_0000052474" description="Globin">
    <location>
        <begin position="2"/>
        <end position="151"/>
    </location>
</feature>
<feature type="domain" description="Globin" evidence="2">
    <location>
        <begin position="2"/>
        <end position="151"/>
    </location>
</feature>
<feature type="binding site" description="proximal binding residue" evidence="2">
    <location>
        <position position="100"/>
    </location>
    <ligand>
        <name>heme b</name>
        <dbReference type="ChEBI" id="CHEBI:60344"/>
    </ligand>
    <ligandPart>
        <name>Fe</name>
        <dbReference type="ChEBI" id="CHEBI:18248"/>
    </ligandPart>
</feature>
<reference key="1">
    <citation type="journal article" date="1998" name="J. Biol. Chem.">
        <title>Characterization of the myoglobin and its coding gene of the mollusc Biomphalaria glabrata.</title>
        <authorList>
            <person name="Dewilde S."/>
            <person name="Winnepenninckx B."/>
            <person name="Arndt M.H.L."/>
            <person name="Nascimento D.G."/>
            <person name="Santoro M.M."/>
            <person name="Knight M."/>
            <person name="Miller A.N."/>
            <person name="Kerlavage A.R."/>
            <person name="Geoghagen N."/>
            <person name="Van Marck E."/>
            <person name="Liu L.X."/>
            <person name="Weber R.E."/>
            <person name="Moens L."/>
        </authorList>
    </citation>
    <scope>NUCLEOTIDE SEQUENCE [GENOMIC DNA]</scope>
    <source>
        <tissue>Radular muscle</tissue>
    </source>
</reference>
<comment type="miscellaneous">
    <text>This molluscan globin lacks one of the heme-binding histidine residues found in most other globins.</text>
</comment>
<comment type="similarity">
    <text evidence="2">Belongs to the globin family.</text>
</comment>
<proteinExistence type="inferred from homology"/>
<organism>
    <name type="scientific">Biomphalaria glabrata</name>
    <name type="common">Bloodfluke planorb</name>
    <name type="synonym">Freshwater snail</name>
    <dbReference type="NCBI Taxonomy" id="6526"/>
    <lineage>
        <taxon>Eukaryota</taxon>
        <taxon>Metazoa</taxon>
        <taxon>Spiralia</taxon>
        <taxon>Lophotrochozoa</taxon>
        <taxon>Mollusca</taxon>
        <taxon>Gastropoda</taxon>
        <taxon>Heterobranchia</taxon>
        <taxon>Euthyneura</taxon>
        <taxon>Panpulmonata</taxon>
        <taxon>Hygrophila</taxon>
        <taxon>Lymnaeoidea</taxon>
        <taxon>Planorbidae</taxon>
        <taxon>Biomphalaria</taxon>
    </lineage>
</organism>
<evidence type="ECO:0000250" key="1"/>
<evidence type="ECO:0000255" key="2">
    <source>
        <dbReference type="PROSITE-ProRule" id="PRU00238"/>
    </source>
</evidence>
<dbReference type="EMBL" id="U89283">
    <property type="protein sequence ID" value="AAC24318.1"/>
    <property type="molecule type" value="Genomic_DNA"/>
</dbReference>
<dbReference type="RefSeq" id="XP_055881757.1">
    <property type="nucleotide sequence ID" value="XM_056025782.1"/>
</dbReference>
<dbReference type="SMR" id="O77003"/>
<dbReference type="STRING" id="6526.O77003"/>
<dbReference type="GeneID" id="106074788"/>
<dbReference type="VEuPathDB" id="VectorBase:BGLAX_043231"/>
<dbReference type="VEuPathDB" id="VectorBase:BGLB010864"/>
<dbReference type="OrthoDB" id="6099155at2759"/>
<dbReference type="Proteomes" id="UP000076420">
    <property type="component" value="Unassembled WGS sequence"/>
</dbReference>
<dbReference type="Proteomes" id="UP001165740">
    <property type="component" value="Chromosome 4"/>
</dbReference>
<dbReference type="GO" id="GO:0020037">
    <property type="term" value="F:heme binding"/>
    <property type="evidence" value="ECO:0007669"/>
    <property type="project" value="InterPro"/>
</dbReference>
<dbReference type="GO" id="GO:0046872">
    <property type="term" value="F:metal ion binding"/>
    <property type="evidence" value="ECO:0007669"/>
    <property type="project" value="UniProtKB-KW"/>
</dbReference>
<dbReference type="GO" id="GO:0019825">
    <property type="term" value="F:oxygen binding"/>
    <property type="evidence" value="ECO:0007669"/>
    <property type="project" value="InterPro"/>
</dbReference>
<dbReference type="GO" id="GO:0005344">
    <property type="term" value="F:oxygen carrier activity"/>
    <property type="evidence" value="ECO:0007669"/>
    <property type="project" value="UniProtKB-KW"/>
</dbReference>
<dbReference type="CDD" id="cd01040">
    <property type="entry name" value="Mb-like"/>
    <property type="match status" value="1"/>
</dbReference>
<dbReference type="Gene3D" id="1.10.490.10">
    <property type="entry name" value="Globins"/>
    <property type="match status" value="1"/>
</dbReference>
<dbReference type="InterPro" id="IPR000971">
    <property type="entry name" value="Globin"/>
</dbReference>
<dbReference type="InterPro" id="IPR009050">
    <property type="entry name" value="Globin-like_sf"/>
</dbReference>
<dbReference type="InterPro" id="IPR012292">
    <property type="entry name" value="Globin/Proto"/>
</dbReference>
<dbReference type="InterPro" id="IPR044399">
    <property type="entry name" value="Mb-like_M"/>
</dbReference>
<dbReference type="PANTHER" id="PTHR47217">
    <property type="entry name" value="GLOBIN-LIKE PROTEIN"/>
    <property type="match status" value="1"/>
</dbReference>
<dbReference type="PANTHER" id="PTHR47217:SF1">
    <property type="entry name" value="GLOBIN-LIKE PROTEIN"/>
    <property type="match status" value="1"/>
</dbReference>
<dbReference type="Pfam" id="PF00042">
    <property type="entry name" value="Globin"/>
    <property type="match status" value="1"/>
</dbReference>
<dbReference type="SUPFAM" id="SSF46458">
    <property type="entry name" value="Globin-like"/>
    <property type="match status" value="1"/>
</dbReference>
<dbReference type="PROSITE" id="PS01033">
    <property type="entry name" value="GLOBIN"/>
    <property type="match status" value="1"/>
</dbReference>